<organism>
    <name type="scientific">Erwinia tasmaniensis (strain DSM 17950 / CFBP 7177 / CIP 109463 / NCPPB 4357 / Et1/99)</name>
    <dbReference type="NCBI Taxonomy" id="465817"/>
    <lineage>
        <taxon>Bacteria</taxon>
        <taxon>Pseudomonadati</taxon>
        <taxon>Pseudomonadota</taxon>
        <taxon>Gammaproteobacteria</taxon>
        <taxon>Enterobacterales</taxon>
        <taxon>Erwiniaceae</taxon>
        <taxon>Erwinia</taxon>
    </lineage>
</organism>
<keyword id="KW-0067">ATP-binding</keyword>
<keyword id="KW-0963">Cytoplasm</keyword>
<keyword id="KW-0418">Kinase</keyword>
<keyword id="KW-0545">Nucleotide biosynthesis</keyword>
<keyword id="KW-0547">Nucleotide-binding</keyword>
<keyword id="KW-1185">Reference proteome</keyword>
<keyword id="KW-0808">Transferase</keyword>
<feature type="chain" id="PRO_1000100562" description="Adenylate kinase">
    <location>
        <begin position="1"/>
        <end position="214"/>
    </location>
</feature>
<feature type="region of interest" description="NMP" evidence="1">
    <location>
        <begin position="30"/>
        <end position="59"/>
    </location>
</feature>
<feature type="region of interest" description="LID">
    <location>
        <begin position="122"/>
        <end position="159"/>
    </location>
</feature>
<feature type="binding site" evidence="1">
    <location>
        <begin position="10"/>
        <end position="15"/>
    </location>
    <ligand>
        <name>ATP</name>
        <dbReference type="ChEBI" id="CHEBI:30616"/>
    </ligand>
</feature>
<feature type="binding site" evidence="1">
    <location>
        <position position="31"/>
    </location>
    <ligand>
        <name>AMP</name>
        <dbReference type="ChEBI" id="CHEBI:456215"/>
    </ligand>
</feature>
<feature type="binding site" evidence="1">
    <location>
        <position position="36"/>
    </location>
    <ligand>
        <name>AMP</name>
        <dbReference type="ChEBI" id="CHEBI:456215"/>
    </ligand>
</feature>
<feature type="binding site" evidence="1">
    <location>
        <begin position="57"/>
        <end position="59"/>
    </location>
    <ligand>
        <name>AMP</name>
        <dbReference type="ChEBI" id="CHEBI:456215"/>
    </ligand>
</feature>
<feature type="binding site" evidence="1">
    <location>
        <begin position="85"/>
        <end position="88"/>
    </location>
    <ligand>
        <name>AMP</name>
        <dbReference type="ChEBI" id="CHEBI:456215"/>
    </ligand>
</feature>
<feature type="binding site" evidence="1">
    <location>
        <position position="92"/>
    </location>
    <ligand>
        <name>AMP</name>
        <dbReference type="ChEBI" id="CHEBI:456215"/>
    </ligand>
</feature>
<feature type="binding site" evidence="1">
    <location>
        <position position="123"/>
    </location>
    <ligand>
        <name>ATP</name>
        <dbReference type="ChEBI" id="CHEBI:30616"/>
    </ligand>
</feature>
<feature type="binding site" evidence="1">
    <location>
        <begin position="132"/>
        <end position="133"/>
    </location>
    <ligand>
        <name>ATP</name>
        <dbReference type="ChEBI" id="CHEBI:30616"/>
    </ligand>
</feature>
<feature type="binding site" evidence="1">
    <location>
        <position position="156"/>
    </location>
    <ligand>
        <name>AMP</name>
        <dbReference type="ChEBI" id="CHEBI:456215"/>
    </ligand>
</feature>
<feature type="binding site" evidence="1">
    <location>
        <position position="167"/>
    </location>
    <ligand>
        <name>AMP</name>
        <dbReference type="ChEBI" id="CHEBI:456215"/>
    </ligand>
</feature>
<feature type="binding site" evidence="1">
    <location>
        <position position="200"/>
    </location>
    <ligand>
        <name>ATP</name>
        <dbReference type="ChEBI" id="CHEBI:30616"/>
    </ligand>
</feature>
<reference key="1">
    <citation type="journal article" date="2008" name="Environ. Microbiol.">
        <title>The genome of Erwinia tasmaniensis strain Et1/99, a non-pathogenic bacterium in the genus Erwinia.</title>
        <authorList>
            <person name="Kube M."/>
            <person name="Migdoll A.M."/>
            <person name="Mueller I."/>
            <person name="Kuhl H."/>
            <person name="Beck A."/>
            <person name="Reinhardt R."/>
            <person name="Geider K."/>
        </authorList>
    </citation>
    <scope>NUCLEOTIDE SEQUENCE [LARGE SCALE GENOMIC DNA]</scope>
    <source>
        <strain>DSM 17950 / CFBP 7177 / CIP 109463 / NCPPB 4357 / Et1/99</strain>
    </source>
</reference>
<evidence type="ECO:0000255" key="1">
    <source>
        <dbReference type="HAMAP-Rule" id="MF_00235"/>
    </source>
</evidence>
<comment type="function">
    <text evidence="1">Catalyzes the reversible transfer of the terminal phosphate group between ATP and AMP. Plays an important role in cellular energy homeostasis and in adenine nucleotide metabolism.</text>
</comment>
<comment type="catalytic activity">
    <reaction evidence="1">
        <text>AMP + ATP = 2 ADP</text>
        <dbReference type="Rhea" id="RHEA:12973"/>
        <dbReference type="ChEBI" id="CHEBI:30616"/>
        <dbReference type="ChEBI" id="CHEBI:456215"/>
        <dbReference type="ChEBI" id="CHEBI:456216"/>
        <dbReference type="EC" id="2.7.4.3"/>
    </reaction>
</comment>
<comment type="pathway">
    <text evidence="1">Purine metabolism; AMP biosynthesis via salvage pathway; AMP from ADP: step 1/1.</text>
</comment>
<comment type="subunit">
    <text evidence="1">Monomer.</text>
</comment>
<comment type="subcellular location">
    <subcellularLocation>
        <location evidence="1">Cytoplasm</location>
    </subcellularLocation>
</comment>
<comment type="domain">
    <text evidence="1">Consists of three domains, a large central CORE domain and two small peripheral domains, NMPbind and LID, which undergo movements during catalysis. The LID domain closes over the site of phosphoryl transfer upon ATP binding. Assembling and dissambling the active center during each catalytic cycle provides an effective means to prevent ATP hydrolysis.</text>
</comment>
<comment type="similarity">
    <text evidence="1">Belongs to the adenylate kinase family.</text>
</comment>
<name>KAD_ERWT9</name>
<gene>
    <name evidence="1" type="primary">adk</name>
    <name type="ordered locus">ETA_24650</name>
</gene>
<protein>
    <recommendedName>
        <fullName evidence="1">Adenylate kinase</fullName>
        <shortName evidence="1">AK</shortName>
        <ecNumber evidence="1">2.7.4.3</ecNumber>
    </recommendedName>
    <alternativeName>
        <fullName evidence="1">ATP-AMP transphosphorylase</fullName>
    </alternativeName>
    <alternativeName>
        <fullName evidence="1">ATP:AMP phosphotransferase</fullName>
    </alternativeName>
    <alternativeName>
        <fullName evidence="1">Adenylate monophosphate kinase</fullName>
    </alternativeName>
</protein>
<dbReference type="EC" id="2.7.4.3" evidence="1"/>
<dbReference type="EMBL" id="CU468135">
    <property type="protein sequence ID" value="CAO97511.1"/>
    <property type="molecule type" value="Genomic_DNA"/>
</dbReference>
<dbReference type="RefSeq" id="WP_012442177.1">
    <property type="nucleotide sequence ID" value="NC_010694.1"/>
</dbReference>
<dbReference type="SMR" id="B2VHX2"/>
<dbReference type="STRING" id="465817.ETA_24650"/>
<dbReference type="KEGG" id="eta:ETA_24650"/>
<dbReference type="eggNOG" id="COG0563">
    <property type="taxonomic scope" value="Bacteria"/>
</dbReference>
<dbReference type="HOGENOM" id="CLU_032354_1_2_6"/>
<dbReference type="OrthoDB" id="9805030at2"/>
<dbReference type="UniPathway" id="UPA00588">
    <property type="reaction ID" value="UER00649"/>
</dbReference>
<dbReference type="Proteomes" id="UP000001726">
    <property type="component" value="Chromosome"/>
</dbReference>
<dbReference type="GO" id="GO:0005737">
    <property type="term" value="C:cytoplasm"/>
    <property type="evidence" value="ECO:0007669"/>
    <property type="project" value="UniProtKB-SubCell"/>
</dbReference>
<dbReference type="GO" id="GO:0004017">
    <property type="term" value="F:adenylate kinase activity"/>
    <property type="evidence" value="ECO:0007669"/>
    <property type="project" value="UniProtKB-UniRule"/>
</dbReference>
<dbReference type="GO" id="GO:0005524">
    <property type="term" value="F:ATP binding"/>
    <property type="evidence" value="ECO:0007669"/>
    <property type="project" value="UniProtKB-UniRule"/>
</dbReference>
<dbReference type="GO" id="GO:0044209">
    <property type="term" value="P:AMP salvage"/>
    <property type="evidence" value="ECO:0007669"/>
    <property type="project" value="UniProtKB-UniRule"/>
</dbReference>
<dbReference type="CDD" id="cd01428">
    <property type="entry name" value="ADK"/>
    <property type="match status" value="1"/>
</dbReference>
<dbReference type="FunFam" id="3.40.50.300:FF:000106">
    <property type="entry name" value="Adenylate kinase mitochondrial"/>
    <property type="match status" value="1"/>
</dbReference>
<dbReference type="Gene3D" id="3.40.50.300">
    <property type="entry name" value="P-loop containing nucleotide triphosphate hydrolases"/>
    <property type="match status" value="1"/>
</dbReference>
<dbReference type="HAMAP" id="MF_00235">
    <property type="entry name" value="Adenylate_kinase_Adk"/>
    <property type="match status" value="1"/>
</dbReference>
<dbReference type="InterPro" id="IPR006259">
    <property type="entry name" value="Adenyl_kin_sub"/>
</dbReference>
<dbReference type="InterPro" id="IPR000850">
    <property type="entry name" value="Adenylat/UMP-CMP_kin"/>
</dbReference>
<dbReference type="InterPro" id="IPR033690">
    <property type="entry name" value="Adenylat_kinase_CS"/>
</dbReference>
<dbReference type="InterPro" id="IPR007862">
    <property type="entry name" value="Adenylate_kinase_lid-dom"/>
</dbReference>
<dbReference type="InterPro" id="IPR027417">
    <property type="entry name" value="P-loop_NTPase"/>
</dbReference>
<dbReference type="NCBIfam" id="TIGR01351">
    <property type="entry name" value="adk"/>
    <property type="match status" value="1"/>
</dbReference>
<dbReference type="NCBIfam" id="NF001379">
    <property type="entry name" value="PRK00279.1-1"/>
    <property type="match status" value="1"/>
</dbReference>
<dbReference type="NCBIfam" id="NF001380">
    <property type="entry name" value="PRK00279.1-2"/>
    <property type="match status" value="1"/>
</dbReference>
<dbReference type="NCBIfam" id="NF001381">
    <property type="entry name" value="PRK00279.1-3"/>
    <property type="match status" value="1"/>
</dbReference>
<dbReference type="NCBIfam" id="NF011100">
    <property type="entry name" value="PRK14527.1"/>
    <property type="match status" value="1"/>
</dbReference>
<dbReference type="PANTHER" id="PTHR23359">
    <property type="entry name" value="NUCLEOTIDE KINASE"/>
    <property type="match status" value="1"/>
</dbReference>
<dbReference type="Pfam" id="PF00406">
    <property type="entry name" value="ADK"/>
    <property type="match status" value="1"/>
</dbReference>
<dbReference type="Pfam" id="PF05191">
    <property type="entry name" value="ADK_lid"/>
    <property type="match status" value="1"/>
</dbReference>
<dbReference type="PRINTS" id="PR00094">
    <property type="entry name" value="ADENYLTKNASE"/>
</dbReference>
<dbReference type="SUPFAM" id="SSF52540">
    <property type="entry name" value="P-loop containing nucleoside triphosphate hydrolases"/>
    <property type="match status" value="1"/>
</dbReference>
<dbReference type="PROSITE" id="PS00113">
    <property type="entry name" value="ADENYLATE_KINASE"/>
    <property type="match status" value="1"/>
</dbReference>
<proteinExistence type="inferred from homology"/>
<accession>B2VHX2</accession>
<sequence length="214" mass="23482">MRIILLGAPGAGKGTQAQFIMEKYGIPQISTGDMLRAAVKAGSELGLKAKEIMDAGKLVTDELVIALVKERITAEDCRNGFLLDGFPRTIPQADAMKEAGIKVDNVLEFDVPDELIVERIVGRRVHAPSGRVYHVTFNPPRVEGKDDMTGEELTTRKDDQEETVRKRLVEYHQMTAPLIAYYSKEAAAGNTAYHKIDGTRKVTEVSAELATILG</sequence>